<keyword id="KW-0167">Capsid protein</keyword>
<keyword id="KW-1139">Helical capsid protein</keyword>
<keyword id="KW-1048">Host nucleus</keyword>
<keyword id="KW-0945">Host-virus interaction</keyword>
<keyword id="KW-0687">Ribonucleoprotein</keyword>
<keyword id="KW-0694">RNA-binding</keyword>
<keyword id="KW-0543">Viral nucleoprotein</keyword>
<keyword id="KW-1163">Viral penetration into host nucleus</keyword>
<keyword id="KW-0946">Virion</keyword>
<keyword id="KW-1160">Virus entry into host cell</keyword>
<feature type="chain" id="PRO_0000274809" description="Nucleoprotein">
    <location>
        <begin position="1"/>
        <end position="498"/>
    </location>
</feature>
<feature type="region of interest" description="Disordered" evidence="2">
    <location>
        <begin position="1"/>
        <end position="21"/>
    </location>
</feature>
<feature type="short sequence motif" description="Unconventional nuclear localization signal" evidence="1">
    <location>
        <begin position="1"/>
        <end position="18"/>
    </location>
</feature>
<feature type="short sequence motif" description="Bipartite nuclear localization signal" evidence="1">
    <location>
        <begin position="198"/>
        <end position="216"/>
    </location>
</feature>
<sequence length="498" mass="56267">MASQGTKRSYEQMETGGERQNATEIRASVGRMVGGIGRFYIQMCTELKLSDYEGRLIQNSITIERMVLSAFDERRNKYLEEHPSAGKDPKKTGGPIYRRRDGKWVRELTLYDKEEIRRIWRQANNGEDATAGLTHLMIWHSNLNDATYQRTRALVRTGMDPRMCSLMQGSTLPRRSGAAGAAVKGVGTMVMELIRMIKRGINDRNFWRGENGRRTRIAYERMCNILKGKFQTAAQRAMMDQVRESRNPGNAEIEDLIFLARSALILRGSVAHKSCLPACVYGLAVASGYDFEREGYSLVGIDPFRLLQNSQVFSLIRPNENPAHKSQLVWMACHSAAFEDLRVSSFIRGTRVVPRGQLSTRGVQIASNENMETMDSSTLELRSRYWAIRTRSGGNTNQQRASAGQISVQPTFSVQRNLPFERATIMAAFTGNTEGRTSDMRTEIIRMMENARPEDVSFQGRGVFELSDEKATNPIVPSFDMSNEGSYFFGDNAEEYDN</sequence>
<organismHost>
    <name type="scientific">Aves</name>
    <dbReference type="NCBI Taxonomy" id="8782"/>
</organismHost>
<reference key="1">
    <citation type="journal article" date="2006" name="Science">
        <title>Large-scale sequence analysis of avian influenza isolates.</title>
        <authorList>
            <person name="Obenauer J.C."/>
            <person name="Denson J."/>
            <person name="Mehta P.K."/>
            <person name="Su X."/>
            <person name="Mukatira S."/>
            <person name="Finkelstein D.B."/>
            <person name="Xu X."/>
            <person name="Wang J."/>
            <person name="Ma J."/>
            <person name="Fan Y."/>
            <person name="Rakestraw K.M."/>
            <person name="Webster R.G."/>
            <person name="Hoffmann E."/>
            <person name="Krauss S."/>
            <person name="Zheng J."/>
            <person name="Zhang Z."/>
            <person name="Naeve C.W."/>
        </authorList>
    </citation>
    <scope>NUCLEOTIDE SEQUENCE [GENOMIC RNA]</scope>
</reference>
<gene>
    <name evidence="1" type="primary">NP</name>
</gene>
<dbReference type="EMBL" id="CY005829">
    <property type="protein sequence ID" value="ABB20527.1"/>
    <property type="molecule type" value="Genomic_RNA"/>
</dbReference>
<dbReference type="SMR" id="Q20P01"/>
<dbReference type="ABCD" id="Q20P01">
    <property type="antibodies" value="2 sequenced antibodies"/>
</dbReference>
<dbReference type="PRO" id="PR:Q20P01"/>
<dbReference type="Proteomes" id="UP000007770">
    <property type="component" value="Genome"/>
</dbReference>
<dbReference type="GO" id="GO:0019029">
    <property type="term" value="C:helical viral capsid"/>
    <property type="evidence" value="ECO:0007669"/>
    <property type="project" value="UniProtKB-UniRule"/>
</dbReference>
<dbReference type="GO" id="GO:0043657">
    <property type="term" value="C:host cell"/>
    <property type="evidence" value="ECO:0007669"/>
    <property type="project" value="GOC"/>
</dbReference>
<dbReference type="GO" id="GO:0042025">
    <property type="term" value="C:host cell nucleus"/>
    <property type="evidence" value="ECO:0007669"/>
    <property type="project" value="UniProtKB-SubCell"/>
</dbReference>
<dbReference type="GO" id="GO:1990904">
    <property type="term" value="C:ribonucleoprotein complex"/>
    <property type="evidence" value="ECO:0007669"/>
    <property type="project" value="UniProtKB-KW"/>
</dbReference>
<dbReference type="GO" id="GO:0019013">
    <property type="term" value="C:viral nucleocapsid"/>
    <property type="evidence" value="ECO:0007669"/>
    <property type="project" value="UniProtKB-UniRule"/>
</dbReference>
<dbReference type="GO" id="GO:0003723">
    <property type="term" value="F:RNA binding"/>
    <property type="evidence" value="ECO:0007669"/>
    <property type="project" value="UniProtKB-UniRule"/>
</dbReference>
<dbReference type="GO" id="GO:0005198">
    <property type="term" value="F:structural molecule activity"/>
    <property type="evidence" value="ECO:0007669"/>
    <property type="project" value="UniProtKB-UniRule"/>
</dbReference>
<dbReference type="GO" id="GO:0046718">
    <property type="term" value="P:symbiont entry into host cell"/>
    <property type="evidence" value="ECO:0007669"/>
    <property type="project" value="UniProtKB-KW"/>
</dbReference>
<dbReference type="GO" id="GO:0075732">
    <property type="term" value="P:viral penetration into host nucleus"/>
    <property type="evidence" value="ECO:0007669"/>
    <property type="project" value="UniProtKB-UniRule"/>
</dbReference>
<dbReference type="HAMAP" id="MF_04070">
    <property type="entry name" value="INFV_NCAP"/>
    <property type="match status" value="1"/>
</dbReference>
<dbReference type="InterPro" id="IPR002141">
    <property type="entry name" value="Flu_NP"/>
</dbReference>
<dbReference type="Pfam" id="PF00506">
    <property type="entry name" value="Flu_NP"/>
    <property type="match status" value="1"/>
</dbReference>
<dbReference type="SUPFAM" id="SSF161003">
    <property type="entry name" value="flu NP-like"/>
    <property type="match status" value="1"/>
</dbReference>
<proteinExistence type="inferred from homology"/>
<protein>
    <recommendedName>
        <fullName evidence="1">Nucleoprotein</fullName>
    </recommendedName>
    <alternativeName>
        <fullName evidence="1">Nucleocapsid protein</fullName>
        <shortName evidence="1">Protein N</shortName>
    </alternativeName>
</protein>
<evidence type="ECO:0000255" key="1">
    <source>
        <dbReference type="HAMAP-Rule" id="MF_04070"/>
    </source>
</evidence>
<evidence type="ECO:0000256" key="2">
    <source>
        <dbReference type="SAM" id="MobiDB-lite"/>
    </source>
</evidence>
<comment type="function">
    <text evidence="1">Encapsidates the negative strand viral RNA, protecting it from nucleases. The encapsidated genomic RNA is termed the ribonucleoprotein (RNP) and serves as template for transcription and replication. The RNP needs to be localized in the host nucleus to start an infectious cycle, but is too large to diffuse through the nuclear pore complex. NP comprises at least 2 nuclear localization signals that are responsible for the active RNP import into the nucleus through cellular importin alpha/beta pathway. Later in the infection, nclear export of RNPs are mediated through viral proteins NEP interacting with M1 which binds nucleoproteins. It is possible that nucleoprotein binds directly host exportin-1/XPO1 and plays an active role in RNPs nuclear export. M1 interaction with RNP seems to hide nucleoprotein's nuclear localization signals. Soon after a virion infects a new cell, M1 dissociates from the RNP under acidification of the virion driven by M2 protein. Dissociation of M1 from RNP unmasks nucleoprotein's nuclear localization signals, targeting the RNP to the nucleus.</text>
</comment>
<comment type="subunit">
    <text evidence="1">Homomultimerizes to form the nucleocapsid. May bind host exportin-1/XPO1. Binds to viral genomic RNA. Protein-RNA contacts are mediated by a combination of electrostatic interactions between positively charged residues and the phosphate backbone and planar interactions between aromatic side chains and bases.</text>
</comment>
<comment type="subcellular location">
    <subcellularLocation>
        <location evidence="1">Virion</location>
    </subcellularLocation>
    <subcellularLocation>
        <location evidence="1">Host nucleus</location>
    </subcellularLocation>
</comment>
<comment type="PTM">
    <text evidence="1">Late in virus-infected cells, may be cleaved from a 56-kDa protein to a 53-kDa protein by a cellular caspase. This cleavage might be a marker for the onset of apoptosis in infected cells or have a specific function in virus host interaction.</text>
</comment>
<comment type="similarity">
    <text evidence="1">Belongs to the influenza viruses nucleoprotein family.</text>
</comment>
<organism>
    <name type="scientific">Influenza A virus (strain A/Turkey/Ontario/6118/1968 H8N4)</name>
    <dbReference type="NCBI Taxonomy" id="311175"/>
    <lineage>
        <taxon>Viruses</taxon>
        <taxon>Riboviria</taxon>
        <taxon>Orthornavirae</taxon>
        <taxon>Negarnaviricota</taxon>
        <taxon>Polyploviricotina</taxon>
        <taxon>Insthoviricetes</taxon>
        <taxon>Articulavirales</taxon>
        <taxon>Orthomyxoviridae</taxon>
        <taxon>Alphainfluenzavirus</taxon>
        <taxon>Alphainfluenzavirus influenzae</taxon>
        <taxon>Influenza A virus</taxon>
    </lineage>
</organism>
<name>NCAP_I68A3</name>
<accession>Q20P01</accession>